<sequence>MEYTTKTQIYQKVKKPMLERQRRARMNKCLDNLKTLVAELRGDDGILRMDKAEMLESAVIFMRQQKTPKKVAQEEQSLPLDSFKNGYMNAVNEVSRVMASTPGMSVDLGKSVMTHLGRVYKNLQQFHEAQSAADFIQNSMDCSSMDKAPLSPASSGYHSDCDSPAPSPQPMQQPLWRPW</sequence>
<comment type="function">
    <text evidence="5 6 7">Participates in the control of cell fate choice by uncommitted neuroectodermal cells in the embryo (PubMed:2540957). Transcriptional repressor (PubMed:8001118). Binds DNA on N-box motifs: 5'-CACNAG-3' (PubMed:8001118). Part of the Notch signaling pathway (PubMed:22357926).</text>
</comment>
<comment type="subunit">
    <text evidence="5 7">Homodimer (PubMed:22357926). Heterodimers with dpn (PubMed:22357926). Transcription repression requires formation of a complex with a corepressor protein (Groucho) (PubMed:8001118).</text>
</comment>
<comment type="interaction">
    <interactant intactId="EBI-185388">
        <id>P13098</id>
    </interactant>
    <interactant intactId="EBI-93115">
        <id>P08181</id>
        <label>CkIIalpha</label>
    </interactant>
    <organismsDiffer>false</organismsDiffer>
    <experiments>3</experiments>
</comment>
<comment type="interaction">
    <interactant intactId="EBI-185388">
        <id>P13098</id>
    </interactant>
    <interactant intactId="EBI-153866">
        <id>P16371</id>
        <label>gro</label>
    </interactant>
    <organismsDiffer>false</organismsDiffer>
    <experiments>4</experiments>
</comment>
<comment type="interaction">
    <interactant intactId="EBI-185388">
        <id>P13098</id>
    </interactant>
    <interactant intactId="EBI-163133">
        <id>Q24142</id>
        <label>Hr78</label>
    </interactant>
    <organismsDiffer>false</organismsDiffer>
    <experiments>3</experiments>
</comment>
<comment type="subcellular location">
    <subcellularLocation>
        <location evidence="9">Nucleus</location>
    </subcellularLocation>
</comment>
<comment type="developmental stage">
    <text evidence="5 6">In larvae, detected in neuroblasts (at protein level) (PubMed:22357926). Mesectodermal expression appears shortly before the onset of gastrulation (PubMed:2540957). In imaginal disks, expression is seen primarily within presumptive proneural clusters of eye-antennal, wing and leg disks (PubMed:2540957).</text>
</comment>
<comment type="domain">
    <text evidence="7">The orange domain and the basic helix-loop-helix motif mediate repression of specific transcriptional activators, such as basic helix-loop-helix protein dimers.</text>
</comment>
<comment type="domain">
    <text evidence="7">The C-terminal WRPW motif is a transcriptional repression domain necessary for the interaction with Groucho, a transcriptional corepressor recruited to specific target DNA by Hairy-related proteins.</text>
</comment>
<organism>
    <name type="scientific">Drosophila melanogaster</name>
    <name type="common">Fruit fly</name>
    <dbReference type="NCBI Taxonomy" id="7227"/>
    <lineage>
        <taxon>Eukaryota</taxon>
        <taxon>Metazoa</taxon>
        <taxon>Ecdysozoa</taxon>
        <taxon>Arthropoda</taxon>
        <taxon>Hexapoda</taxon>
        <taxon>Insecta</taxon>
        <taxon>Pterygota</taxon>
        <taxon>Neoptera</taxon>
        <taxon>Endopterygota</taxon>
        <taxon>Diptera</taxon>
        <taxon>Brachycera</taxon>
        <taxon>Muscomorpha</taxon>
        <taxon>Ephydroidea</taxon>
        <taxon>Drosophilidae</taxon>
        <taxon>Drosophila</taxon>
        <taxon>Sophophora</taxon>
    </lineage>
</organism>
<name>ESM8_DROME</name>
<keyword id="KW-0217">Developmental protein</keyword>
<keyword id="KW-0221">Differentiation</keyword>
<keyword id="KW-0238">DNA-binding</keyword>
<keyword id="KW-0524">Neurogenesis</keyword>
<keyword id="KW-0539">Nucleus</keyword>
<keyword id="KW-1185">Reference proteome</keyword>
<keyword id="KW-0678">Repressor</keyword>
<keyword id="KW-0804">Transcription</keyword>
<keyword id="KW-0805">Transcription regulation</keyword>
<gene>
    <name evidence="10" type="primary">E(spl)m8-HLH</name>
    <name evidence="8" type="synonym">E(spl)</name>
    <name evidence="10" type="synonym">m8</name>
    <name evidence="10" type="ORF">CG8365</name>
</gene>
<evidence type="ECO:0000255" key="1">
    <source>
        <dbReference type="PROSITE-ProRule" id="PRU00380"/>
    </source>
</evidence>
<evidence type="ECO:0000255" key="2">
    <source>
        <dbReference type="PROSITE-ProRule" id="PRU00981"/>
    </source>
</evidence>
<evidence type="ECO:0000256" key="3">
    <source>
        <dbReference type="SAM" id="MobiDB-lite"/>
    </source>
</evidence>
<evidence type="ECO:0000269" key="4">
    <source>
    </source>
</evidence>
<evidence type="ECO:0000269" key="5">
    <source>
    </source>
</evidence>
<evidence type="ECO:0000269" key="6">
    <source>
    </source>
</evidence>
<evidence type="ECO:0000269" key="7">
    <source>
    </source>
</evidence>
<evidence type="ECO:0000303" key="8">
    <source>
    </source>
</evidence>
<evidence type="ECO:0000305" key="9"/>
<evidence type="ECO:0000312" key="10">
    <source>
        <dbReference type="FlyBase" id="FBgn0000591"/>
    </source>
</evidence>
<feature type="chain" id="PRO_0000127175" description="Enhancer of split m8 protein">
    <location>
        <begin position="1"/>
        <end position="179"/>
    </location>
</feature>
<feature type="domain" description="bHLH" evidence="2">
    <location>
        <begin position="10"/>
        <end position="65"/>
    </location>
</feature>
<feature type="domain" description="Orange" evidence="1">
    <location>
        <begin position="83"/>
        <end position="116"/>
    </location>
</feature>
<feature type="region of interest" description="Disordered" evidence="3">
    <location>
        <begin position="146"/>
        <end position="179"/>
    </location>
</feature>
<feature type="short sequence motif" description="WRPW motif">
    <location>
        <begin position="176"/>
        <end position="179"/>
    </location>
</feature>
<feature type="sequence variant" description="In strain: NVIII-2, NVIII-5 and NVIII-m15." evidence="4">
    <original>T</original>
    <variation>I</variation>
    <location>
        <position position="114"/>
    </location>
</feature>
<feature type="sequence variant" description="In strain: NVIII-m11 and NVIII-m19." evidence="4">
    <original>A</original>
    <variation>T</variation>
    <location>
        <position position="133"/>
    </location>
</feature>
<feature type="sequence variant" description="In strain: NVIII-m19." evidence="4">
    <original>D</original>
    <variation>N</variation>
    <location>
        <position position="134"/>
    </location>
</feature>
<feature type="sequence variant" description="In strain: NVIII-m19." evidence="4">
    <original>D</original>
    <variation>V</variation>
    <location>
        <position position="141"/>
    </location>
</feature>
<feature type="sequence variant" description="In strain: NVIII-m12." evidence="4">
    <original>P</original>
    <variation>T</variation>
    <location>
        <position position="174"/>
    </location>
</feature>
<feature type="sequence conflict" description="In Ref. 1; CAA34554." evidence="9" ref="1">
    <original>APS</original>
    <variation>PPT</variation>
    <location>
        <begin position="165"/>
        <end position="167"/>
    </location>
</feature>
<reference key="1">
    <citation type="journal article" date="1989" name="EMBO J.">
        <title>Closely related transcripts encoded by the neurogenic gene complex enhancer of split of Drosophila melanogaster.</title>
        <authorList>
            <person name="Klaembt C."/>
            <person name="Knust E."/>
            <person name="Tietze K."/>
            <person name="Campos-Ortega J.A."/>
        </authorList>
    </citation>
    <scope>NUCLEOTIDE SEQUENCE [GENOMIC DNA]</scope>
    <scope>FUNCTION</scope>
    <scope>DEVELOPMENTAL STAGE</scope>
</reference>
<reference key="2">
    <citation type="journal article" date="2005" name="Mol. Biol. Evol.">
        <title>Identifying signatures of selection at the enhancer of split neurogenic gene complex in Drosophila.</title>
        <authorList>
            <person name="Macdonald S.J."/>
            <person name="Long A.D."/>
        </authorList>
    </citation>
    <scope>NUCLEOTIDE SEQUENCE [GENOMIC DNA]</scope>
    <scope>VARIANTS ILE-114; THR-133; ASN-134; VAL-141 AND THR-174</scope>
    <source>
        <strain>NVIII-1</strain>
        <strain>NVIII-18</strain>
        <strain>NVIII-2</strain>
        <strain>NVIII-22</strain>
        <strain>NVIII-24</strain>
        <strain>NVIII-28</strain>
        <strain>NVIII-41</strain>
        <strain>NVIII-42</strain>
        <strain>NVIII-46</strain>
        <strain>NVIII-5</strain>
        <strain>NVIII-9</strain>
        <strain>NVIII-m11</strain>
        <strain>NVIII-m12</strain>
        <strain>NVIII-m13</strain>
        <strain>NVIII-m15</strain>
        <strain>NVIII-m19</strain>
    </source>
</reference>
<reference key="3">
    <citation type="journal article" date="2000" name="Science">
        <title>The genome sequence of Drosophila melanogaster.</title>
        <authorList>
            <person name="Adams M.D."/>
            <person name="Celniker S.E."/>
            <person name="Holt R.A."/>
            <person name="Evans C.A."/>
            <person name="Gocayne J.D."/>
            <person name="Amanatides P.G."/>
            <person name="Scherer S.E."/>
            <person name="Li P.W."/>
            <person name="Hoskins R.A."/>
            <person name="Galle R.F."/>
            <person name="George R.A."/>
            <person name="Lewis S.E."/>
            <person name="Richards S."/>
            <person name="Ashburner M."/>
            <person name="Henderson S.N."/>
            <person name="Sutton G.G."/>
            <person name="Wortman J.R."/>
            <person name="Yandell M.D."/>
            <person name="Zhang Q."/>
            <person name="Chen L.X."/>
            <person name="Brandon R.C."/>
            <person name="Rogers Y.-H.C."/>
            <person name="Blazej R.G."/>
            <person name="Champe M."/>
            <person name="Pfeiffer B.D."/>
            <person name="Wan K.H."/>
            <person name="Doyle C."/>
            <person name="Baxter E.G."/>
            <person name="Helt G."/>
            <person name="Nelson C.R."/>
            <person name="Miklos G.L.G."/>
            <person name="Abril J.F."/>
            <person name="Agbayani A."/>
            <person name="An H.-J."/>
            <person name="Andrews-Pfannkoch C."/>
            <person name="Baldwin D."/>
            <person name="Ballew R.M."/>
            <person name="Basu A."/>
            <person name="Baxendale J."/>
            <person name="Bayraktaroglu L."/>
            <person name="Beasley E.M."/>
            <person name="Beeson K.Y."/>
            <person name="Benos P.V."/>
            <person name="Berman B.P."/>
            <person name="Bhandari D."/>
            <person name="Bolshakov S."/>
            <person name="Borkova D."/>
            <person name="Botchan M.R."/>
            <person name="Bouck J."/>
            <person name="Brokstein P."/>
            <person name="Brottier P."/>
            <person name="Burtis K.C."/>
            <person name="Busam D.A."/>
            <person name="Butler H."/>
            <person name="Cadieu E."/>
            <person name="Center A."/>
            <person name="Chandra I."/>
            <person name="Cherry J.M."/>
            <person name="Cawley S."/>
            <person name="Dahlke C."/>
            <person name="Davenport L.B."/>
            <person name="Davies P."/>
            <person name="de Pablos B."/>
            <person name="Delcher A."/>
            <person name="Deng Z."/>
            <person name="Mays A.D."/>
            <person name="Dew I."/>
            <person name="Dietz S.M."/>
            <person name="Dodson K."/>
            <person name="Doup L.E."/>
            <person name="Downes M."/>
            <person name="Dugan-Rocha S."/>
            <person name="Dunkov B.C."/>
            <person name="Dunn P."/>
            <person name="Durbin K.J."/>
            <person name="Evangelista C.C."/>
            <person name="Ferraz C."/>
            <person name="Ferriera S."/>
            <person name="Fleischmann W."/>
            <person name="Fosler C."/>
            <person name="Gabrielian A.E."/>
            <person name="Garg N.S."/>
            <person name="Gelbart W.M."/>
            <person name="Glasser K."/>
            <person name="Glodek A."/>
            <person name="Gong F."/>
            <person name="Gorrell J.H."/>
            <person name="Gu Z."/>
            <person name="Guan P."/>
            <person name="Harris M."/>
            <person name="Harris N.L."/>
            <person name="Harvey D.A."/>
            <person name="Heiman T.J."/>
            <person name="Hernandez J.R."/>
            <person name="Houck J."/>
            <person name="Hostin D."/>
            <person name="Houston K.A."/>
            <person name="Howland T.J."/>
            <person name="Wei M.-H."/>
            <person name="Ibegwam C."/>
            <person name="Jalali M."/>
            <person name="Kalush F."/>
            <person name="Karpen G.H."/>
            <person name="Ke Z."/>
            <person name="Kennison J.A."/>
            <person name="Ketchum K.A."/>
            <person name="Kimmel B.E."/>
            <person name="Kodira C.D."/>
            <person name="Kraft C.L."/>
            <person name="Kravitz S."/>
            <person name="Kulp D."/>
            <person name="Lai Z."/>
            <person name="Lasko P."/>
            <person name="Lei Y."/>
            <person name="Levitsky A.A."/>
            <person name="Li J.H."/>
            <person name="Li Z."/>
            <person name="Liang Y."/>
            <person name="Lin X."/>
            <person name="Liu X."/>
            <person name="Mattei B."/>
            <person name="McIntosh T.C."/>
            <person name="McLeod M.P."/>
            <person name="McPherson D."/>
            <person name="Merkulov G."/>
            <person name="Milshina N.V."/>
            <person name="Mobarry C."/>
            <person name="Morris J."/>
            <person name="Moshrefi A."/>
            <person name="Mount S.M."/>
            <person name="Moy M."/>
            <person name="Murphy B."/>
            <person name="Murphy L."/>
            <person name="Muzny D.M."/>
            <person name="Nelson D.L."/>
            <person name="Nelson D.R."/>
            <person name="Nelson K.A."/>
            <person name="Nixon K."/>
            <person name="Nusskern D.R."/>
            <person name="Pacleb J.M."/>
            <person name="Palazzolo M."/>
            <person name="Pittman G.S."/>
            <person name="Pan S."/>
            <person name="Pollard J."/>
            <person name="Puri V."/>
            <person name="Reese M.G."/>
            <person name="Reinert K."/>
            <person name="Remington K."/>
            <person name="Saunders R.D.C."/>
            <person name="Scheeler F."/>
            <person name="Shen H."/>
            <person name="Shue B.C."/>
            <person name="Siden-Kiamos I."/>
            <person name="Simpson M."/>
            <person name="Skupski M.P."/>
            <person name="Smith T.J."/>
            <person name="Spier E."/>
            <person name="Spradling A.C."/>
            <person name="Stapleton M."/>
            <person name="Strong R."/>
            <person name="Sun E."/>
            <person name="Svirskas R."/>
            <person name="Tector C."/>
            <person name="Turner R."/>
            <person name="Venter E."/>
            <person name="Wang A.H."/>
            <person name="Wang X."/>
            <person name="Wang Z.-Y."/>
            <person name="Wassarman D.A."/>
            <person name="Weinstock G.M."/>
            <person name="Weissenbach J."/>
            <person name="Williams S.M."/>
            <person name="Woodage T."/>
            <person name="Worley K.C."/>
            <person name="Wu D."/>
            <person name="Yang S."/>
            <person name="Yao Q.A."/>
            <person name="Ye J."/>
            <person name="Yeh R.-F."/>
            <person name="Zaveri J.S."/>
            <person name="Zhan M."/>
            <person name="Zhang G."/>
            <person name="Zhao Q."/>
            <person name="Zheng L."/>
            <person name="Zheng X.H."/>
            <person name="Zhong F.N."/>
            <person name="Zhong W."/>
            <person name="Zhou X."/>
            <person name="Zhu S.C."/>
            <person name="Zhu X."/>
            <person name="Smith H.O."/>
            <person name="Gibbs R.A."/>
            <person name="Myers E.W."/>
            <person name="Rubin G.M."/>
            <person name="Venter J.C."/>
        </authorList>
    </citation>
    <scope>NUCLEOTIDE SEQUENCE [LARGE SCALE GENOMIC DNA]</scope>
    <source>
        <strain>Berkeley</strain>
    </source>
</reference>
<reference key="4">
    <citation type="journal article" date="2002" name="Genome Biol.">
        <title>Annotation of the Drosophila melanogaster euchromatic genome: a systematic review.</title>
        <authorList>
            <person name="Misra S."/>
            <person name="Crosby M.A."/>
            <person name="Mungall C.J."/>
            <person name="Matthews B.B."/>
            <person name="Campbell K.S."/>
            <person name="Hradecky P."/>
            <person name="Huang Y."/>
            <person name="Kaminker J.S."/>
            <person name="Millburn G.H."/>
            <person name="Prochnik S.E."/>
            <person name="Smith C.D."/>
            <person name="Tupy J.L."/>
            <person name="Whitfield E.J."/>
            <person name="Bayraktaroglu L."/>
            <person name="Berman B.P."/>
            <person name="Bettencourt B.R."/>
            <person name="Celniker S.E."/>
            <person name="de Grey A.D.N.J."/>
            <person name="Drysdale R.A."/>
            <person name="Harris N.L."/>
            <person name="Richter J."/>
            <person name="Russo S."/>
            <person name="Schroeder A.J."/>
            <person name="Shu S.Q."/>
            <person name="Stapleton M."/>
            <person name="Yamada C."/>
            <person name="Ashburner M."/>
            <person name="Gelbart W.M."/>
            <person name="Rubin G.M."/>
            <person name="Lewis S.E."/>
        </authorList>
    </citation>
    <scope>GENOME REANNOTATION</scope>
    <source>
        <strain>Berkeley</strain>
    </source>
</reference>
<reference key="5">
    <citation type="submission" date="2008-11" db="EMBL/GenBank/DDBJ databases">
        <authorList>
            <person name="Stapleton M."/>
            <person name="Carlson J.W."/>
            <person name="Booth B."/>
            <person name="Chavez C."/>
            <person name="Frise E."/>
            <person name="George R.A."/>
            <person name="Pacleb J.M."/>
            <person name="Park S."/>
            <person name="Wan K.H."/>
            <person name="Yu C."/>
            <person name="Celniker S.E."/>
        </authorList>
    </citation>
    <scope>NUCLEOTIDE SEQUENCE [LARGE SCALE MRNA]</scope>
    <source>
        <strain>Berkeley</strain>
        <tissue>Testis</tissue>
    </source>
</reference>
<reference key="6">
    <citation type="journal article" date="2005" name="Mol. Biol. Evol.">
        <title>Intragenic Hill-Robertson interference influences selection intensity on synonymous mutations in Drosophila.</title>
        <authorList>
            <person name="Comeron J.M."/>
            <person name="Guthrie T.B."/>
        </authorList>
    </citation>
    <scope>NUCLEOTIDE SEQUENCE [GENOMIC DNA] OF 8-173</scope>
    <source>
        <strain>Ral1</strain>
    </source>
</reference>
<reference key="7">
    <citation type="journal article" date="1994" name="Cell">
        <title>Groucho is required for Drosophila neurogenesis, segmentation, and sex determination and interacts directly with hairy-related bHLH proteins.</title>
        <authorList>
            <person name="Paroush Z."/>
            <person name="Finley R.L. Jr."/>
            <person name="Kidd T."/>
            <person name="Wainwright S.M."/>
            <person name="Ingham P.W."/>
            <person name="Brent R."/>
            <person name="Ish-Horowicz D."/>
        </authorList>
    </citation>
    <scope>FUNCTION</scope>
    <scope>INTERACTION WITH GRO</scope>
    <scope>DOMAIN WRPW MOTIF</scope>
</reference>
<reference key="8">
    <citation type="journal article" date="2012" name="Development">
        <title>bHLH-O proteins are crucial for Drosophila neuroblast self-renewal and mediate Notch-induced overproliferation.</title>
        <authorList>
            <person name="Zacharioudaki E."/>
            <person name="Magadi S.S."/>
            <person name="Delidakis C."/>
        </authorList>
    </citation>
    <scope>FUNCTION</scope>
    <scope>SUBUNIT</scope>
    <scope>INTERACTION WITH DPN</scope>
    <scope>DEVELOPMENTAL STAGE</scope>
</reference>
<accession>P13098</accession>
<accession>Q0IGQ3</accession>
<accession>Q2XYK0</accession>
<accession>Q5S426</accession>
<accession>Q5S462</accession>
<accession>Q5S474</accession>
<accession>Q5S4H0</accession>
<accession>Q5S4I2</accession>
<accession>Q9VBI5</accession>
<protein>
    <recommendedName>
        <fullName>Enhancer of split m8 protein</fullName>
        <shortName>E(spl)m8</shortName>
    </recommendedName>
</protein>
<proteinExistence type="evidence at protein level"/>
<dbReference type="EMBL" id="X16553">
    <property type="protein sequence ID" value="CAA34554.1"/>
    <property type="molecule type" value="Genomic_DNA"/>
</dbReference>
<dbReference type="EMBL" id="AY779906">
    <property type="protein sequence ID" value="AAV59051.1"/>
    <property type="molecule type" value="Genomic_DNA"/>
</dbReference>
<dbReference type="EMBL" id="AY779907">
    <property type="protein sequence ID" value="AAV59063.1"/>
    <property type="molecule type" value="Genomic_DNA"/>
</dbReference>
<dbReference type="EMBL" id="AY779908">
    <property type="protein sequence ID" value="AAV59075.1"/>
    <property type="molecule type" value="Genomic_DNA"/>
</dbReference>
<dbReference type="EMBL" id="AY779909">
    <property type="protein sequence ID" value="AAV59087.1"/>
    <property type="molecule type" value="Genomic_DNA"/>
</dbReference>
<dbReference type="EMBL" id="AY779910">
    <property type="protein sequence ID" value="AAV59099.1"/>
    <property type="molecule type" value="Genomic_DNA"/>
</dbReference>
<dbReference type="EMBL" id="AY779911">
    <property type="protein sequence ID" value="AAV59111.1"/>
    <property type="molecule type" value="Genomic_DNA"/>
</dbReference>
<dbReference type="EMBL" id="AY779912">
    <property type="protein sequence ID" value="AAV59123.1"/>
    <property type="molecule type" value="Genomic_DNA"/>
</dbReference>
<dbReference type="EMBL" id="AY779913">
    <property type="protein sequence ID" value="AAV59135.1"/>
    <property type="molecule type" value="Genomic_DNA"/>
</dbReference>
<dbReference type="EMBL" id="AY779914">
    <property type="protein sequence ID" value="AAV59147.1"/>
    <property type="molecule type" value="Genomic_DNA"/>
</dbReference>
<dbReference type="EMBL" id="AY779915">
    <property type="protein sequence ID" value="AAV59159.1"/>
    <property type="molecule type" value="Genomic_DNA"/>
</dbReference>
<dbReference type="EMBL" id="AY779916">
    <property type="protein sequence ID" value="AAV59171.1"/>
    <property type="molecule type" value="Genomic_DNA"/>
</dbReference>
<dbReference type="EMBL" id="AY779917">
    <property type="protein sequence ID" value="AAV59183.1"/>
    <property type="molecule type" value="Genomic_DNA"/>
</dbReference>
<dbReference type="EMBL" id="AY779918">
    <property type="protein sequence ID" value="AAV59195.1"/>
    <property type="molecule type" value="Genomic_DNA"/>
</dbReference>
<dbReference type="EMBL" id="AY779919">
    <property type="protein sequence ID" value="AAV59207.1"/>
    <property type="molecule type" value="Genomic_DNA"/>
</dbReference>
<dbReference type="EMBL" id="AY779920">
    <property type="protein sequence ID" value="AAV59219.1"/>
    <property type="molecule type" value="Genomic_DNA"/>
</dbReference>
<dbReference type="EMBL" id="AY779921">
    <property type="protein sequence ID" value="AAV59231.1"/>
    <property type="molecule type" value="Genomic_DNA"/>
</dbReference>
<dbReference type="EMBL" id="AE014297">
    <property type="protein sequence ID" value="AAF56555.1"/>
    <property type="molecule type" value="Genomic_DNA"/>
</dbReference>
<dbReference type="EMBL" id="BT028829">
    <property type="protein sequence ID" value="ABI34210.1"/>
    <property type="molecule type" value="mRNA"/>
</dbReference>
<dbReference type="EMBL" id="BT028834">
    <property type="protein sequence ID" value="ABI34215.2"/>
    <property type="molecule type" value="mRNA"/>
</dbReference>
<dbReference type="EMBL" id="BT028861">
    <property type="protein sequence ID" value="ABI34242.1"/>
    <property type="molecule type" value="mRNA"/>
</dbReference>
<dbReference type="EMBL" id="BT028867">
    <property type="protein sequence ID" value="ABI34248.2"/>
    <property type="molecule type" value="mRNA"/>
</dbReference>
<dbReference type="EMBL" id="DQ138662">
    <property type="protein sequence ID" value="ABA86268.1"/>
    <property type="molecule type" value="Genomic_DNA"/>
</dbReference>
<dbReference type="PIR" id="S03627">
    <property type="entry name" value="S03627"/>
</dbReference>
<dbReference type="RefSeq" id="NP_524513.1">
    <property type="nucleotide sequence ID" value="NM_079789.3"/>
</dbReference>
<dbReference type="SMR" id="P13098"/>
<dbReference type="BioGRID" id="68061">
    <property type="interactions" value="41"/>
</dbReference>
<dbReference type="DIP" id="DIP-22511N"/>
<dbReference type="ELM" id="P13098"/>
<dbReference type="FunCoup" id="P13098">
    <property type="interactions" value="18"/>
</dbReference>
<dbReference type="IntAct" id="P13098">
    <property type="interactions" value="25"/>
</dbReference>
<dbReference type="MINT" id="P13098"/>
<dbReference type="STRING" id="7227.FBpp0084335"/>
<dbReference type="GlyGen" id="P13098">
    <property type="glycosylation" value="1 site"/>
</dbReference>
<dbReference type="iPTMnet" id="P13098"/>
<dbReference type="PaxDb" id="7227-FBpp0084335"/>
<dbReference type="EnsemblMetazoa" id="FBtr0084961">
    <property type="protein sequence ID" value="FBpp0084335"/>
    <property type="gene ID" value="FBgn0000591"/>
</dbReference>
<dbReference type="GeneID" id="43161"/>
<dbReference type="KEGG" id="dme:Dmel_CG8365"/>
<dbReference type="AGR" id="FB:FBgn0000591"/>
<dbReference type="CTD" id="43161"/>
<dbReference type="FlyBase" id="FBgn0000591">
    <property type="gene designation" value="E(spl)m8-HLH"/>
</dbReference>
<dbReference type="VEuPathDB" id="VectorBase:FBgn0000591"/>
<dbReference type="eggNOG" id="KOG4304">
    <property type="taxonomic scope" value="Eukaryota"/>
</dbReference>
<dbReference type="GeneTree" id="ENSGT00940000167178"/>
<dbReference type="HOGENOM" id="CLU_068550_2_2_1"/>
<dbReference type="InParanoid" id="P13098"/>
<dbReference type="OMA" id="GRVYKNL"/>
<dbReference type="OrthoDB" id="6085656at2759"/>
<dbReference type="PhylomeDB" id="P13098"/>
<dbReference type="SignaLink" id="P13098"/>
<dbReference type="BioGRID-ORCS" id="43161">
    <property type="hits" value="0 hits in 3 CRISPR screens"/>
</dbReference>
<dbReference type="ChiTaRS" id="E(spl)mbeta-HLH">
    <property type="organism name" value="fly"/>
</dbReference>
<dbReference type="GenomeRNAi" id="43161"/>
<dbReference type="PRO" id="PR:P13098"/>
<dbReference type="Proteomes" id="UP000000803">
    <property type="component" value="Chromosome 3R"/>
</dbReference>
<dbReference type="Bgee" id="FBgn0000591">
    <property type="expression patterns" value="Expressed in stomodeal invagination (Drosophila) and 37 other cell types or tissues"/>
</dbReference>
<dbReference type="GO" id="GO:0005634">
    <property type="term" value="C:nucleus"/>
    <property type="evidence" value="ECO:0000318"/>
    <property type="project" value="GO_Central"/>
</dbReference>
<dbReference type="GO" id="GO:0001227">
    <property type="term" value="F:DNA-binding transcription repressor activity, RNA polymerase II-specific"/>
    <property type="evidence" value="ECO:0000314"/>
    <property type="project" value="FlyBase"/>
</dbReference>
<dbReference type="GO" id="GO:0046982">
    <property type="term" value="F:protein heterodimerization activity"/>
    <property type="evidence" value="ECO:0000353"/>
    <property type="project" value="FlyBase"/>
</dbReference>
<dbReference type="GO" id="GO:0042803">
    <property type="term" value="F:protein homodimerization activity"/>
    <property type="evidence" value="ECO:0000353"/>
    <property type="project" value="FlyBase"/>
</dbReference>
<dbReference type="GO" id="GO:0000978">
    <property type="term" value="F:RNA polymerase II cis-regulatory region sequence-specific DNA binding"/>
    <property type="evidence" value="ECO:0000318"/>
    <property type="project" value="GO_Central"/>
</dbReference>
<dbReference type="GO" id="GO:0043565">
    <property type="term" value="F:sequence-specific DNA binding"/>
    <property type="evidence" value="ECO:0000314"/>
    <property type="project" value="FlyBase"/>
</dbReference>
<dbReference type="GO" id="GO:0048749">
    <property type="term" value="P:compound eye development"/>
    <property type="evidence" value="ECO:0000315"/>
    <property type="project" value="FlyBase"/>
</dbReference>
<dbReference type="GO" id="GO:0048813">
    <property type="term" value="P:dendrite morphogenesis"/>
    <property type="evidence" value="ECO:0000315"/>
    <property type="project" value="FlyBase"/>
</dbReference>
<dbReference type="GO" id="GO:0007498">
    <property type="term" value="P:mesoderm development"/>
    <property type="evidence" value="ECO:0000315"/>
    <property type="project" value="FlyBase"/>
</dbReference>
<dbReference type="GO" id="GO:0010629">
    <property type="term" value="P:negative regulation of gene expression"/>
    <property type="evidence" value="ECO:0000315"/>
    <property type="project" value="FlyBase"/>
</dbReference>
<dbReference type="GO" id="GO:0050767">
    <property type="term" value="P:regulation of neurogenesis"/>
    <property type="evidence" value="ECO:0000318"/>
    <property type="project" value="GO_Central"/>
</dbReference>
<dbReference type="GO" id="GO:0016360">
    <property type="term" value="P:sensory organ precursor cell fate determination"/>
    <property type="evidence" value="ECO:0000315"/>
    <property type="project" value="FlyBase"/>
</dbReference>
<dbReference type="CDD" id="cd18916">
    <property type="entry name" value="bHLH-O_ESM5_like"/>
    <property type="match status" value="1"/>
</dbReference>
<dbReference type="Gene3D" id="4.10.280.10">
    <property type="entry name" value="Helix-loop-helix DNA-binding domain"/>
    <property type="match status" value="1"/>
</dbReference>
<dbReference type="InterPro" id="IPR011598">
    <property type="entry name" value="bHLH_dom"/>
</dbReference>
<dbReference type="InterPro" id="IPR050370">
    <property type="entry name" value="HES_HEY"/>
</dbReference>
<dbReference type="InterPro" id="IPR036638">
    <property type="entry name" value="HLH_DNA-bd_sf"/>
</dbReference>
<dbReference type="InterPro" id="IPR003650">
    <property type="entry name" value="Orange_dom"/>
</dbReference>
<dbReference type="PANTHER" id="PTHR10985">
    <property type="entry name" value="BASIC HELIX-LOOP-HELIX TRANSCRIPTION FACTOR, HES-RELATED"/>
    <property type="match status" value="1"/>
</dbReference>
<dbReference type="Pfam" id="PF07527">
    <property type="entry name" value="Hairy_orange"/>
    <property type="match status" value="1"/>
</dbReference>
<dbReference type="Pfam" id="PF00010">
    <property type="entry name" value="HLH"/>
    <property type="match status" value="1"/>
</dbReference>
<dbReference type="SMART" id="SM00353">
    <property type="entry name" value="HLH"/>
    <property type="match status" value="1"/>
</dbReference>
<dbReference type="SMART" id="SM00511">
    <property type="entry name" value="ORANGE"/>
    <property type="match status" value="1"/>
</dbReference>
<dbReference type="SUPFAM" id="SSF47459">
    <property type="entry name" value="HLH, helix-loop-helix DNA-binding domain"/>
    <property type="match status" value="1"/>
</dbReference>
<dbReference type="SUPFAM" id="SSF158457">
    <property type="entry name" value="Orange domain-like"/>
    <property type="match status" value="1"/>
</dbReference>
<dbReference type="PROSITE" id="PS50888">
    <property type="entry name" value="BHLH"/>
    <property type="match status" value="1"/>
</dbReference>
<dbReference type="PROSITE" id="PS51054">
    <property type="entry name" value="ORANGE"/>
    <property type="match status" value="1"/>
</dbReference>